<gene>
    <name evidence="1" type="primary">gpmA</name>
    <name type="ordered locus">Bcenmc03_2868</name>
</gene>
<keyword id="KW-0312">Gluconeogenesis</keyword>
<keyword id="KW-0324">Glycolysis</keyword>
<keyword id="KW-0413">Isomerase</keyword>
<name>GPMA_BURO0</name>
<comment type="function">
    <text evidence="1">Catalyzes the interconversion of 2-phosphoglycerate and 3-phosphoglycerate.</text>
</comment>
<comment type="catalytic activity">
    <reaction evidence="1">
        <text>(2R)-2-phosphoglycerate = (2R)-3-phosphoglycerate</text>
        <dbReference type="Rhea" id="RHEA:15901"/>
        <dbReference type="ChEBI" id="CHEBI:58272"/>
        <dbReference type="ChEBI" id="CHEBI:58289"/>
        <dbReference type="EC" id="5.4.2.11"/>
    </reaction>
</comment>
<comment type="pathway">
    <text evidence="1">Carbohydrate degradation; glycolysis; pyruvate from D-glyceraldehyde 3-phosphate: step 3/5.</text>
</comment>
<comment type="subunit">
    <text evidence="1">Homodimer.</text>
</comment>
<comment type="similarity">
    <text evidence="1">Belongs to the phosphoglycerate mutase family. BPG-dependent PGAM subfamily.</text>
</comment>
<proteinExistence type="inferred from homology"/>
<feature type="chain" id="PRO_1000135928" description="2,3-bisphosphoglycerate-dependent phosphoglycerate mutase">
    <location>
        <begin position="1"/>
        <end position="248"/>
    </location>
</feature>
<feature type="active site" description="Tele-phosphohistidine intermediate" evidence="1">
    <location>
        <position position="9"/>
    </location>
</feature>
<feature type="active site" description="Proton donor/acceptor" evidence="1">
    <location>
        <position position="87"/>
    </location>
</feature>
<feature type="binding site" evidence="1">
    <location>
        <begin position="8"/>
        <end position="15"/>
    </location>
    <ligand>
        <name>substrate</name>
    </ligand>
</feature>
<feature type="binding site" evidence="1">
    <location>
        <begin position="21"/>
        <end position="22"/>
    </location>
    <ligand>
        <name>substrate</name>
    </ligand>
</feature>
<feature type="binding site" evidence="1">
    <location>
        <position position="60"/>
    </location>
    <ligand>
        <name>substrate</name>
    </ligand>
</feature>
<feature type="binding site" evidence="1">
    <location>
        <begin position="87"/>
        <end position="90"/>
    </location>
    <ligand>
        <name>substrate</name>
    </ligand>
</feature>
<feature type="binding site" evidence="1">
    <location>
        <position position="98"/>
    </location>
    <ligand>
        <name>substrate</name>
    </ligand>
</feature>
<feature type="binding site" evidence="1">
    <location>
        <begin position="114"/>
        <end position="115"/>
    </location>
    <ligand>
        <name>substrate</name>
    </ligand>
</feature>
<feature type="binding site" evidence="1">
    <location>
        <begin position="183"/>
        <end position="184"/>
    </location>
    <ligand>
        <name>substrate</name>
    </ligand>
</feature>
<feature type="site" description="Transition state stabilizer" evidence="1">
    <location>
        <position position="182"/>
    </location>
</feature>
<dbReference type="EC" id="5.4.2.11" evidence="1"/>
<dbReference type="EMBL" id="CP000958">
    <property type="protein sequence ID" value="ACA92027.1"/>
    <property type="molecule type" value="Genomic_DNA"/>
</dbReference>
<dbReference type="RefSeq" id="WP_012329275.1">
    <property type="nucleotide sequence ID" value="NC_010508.1"/>
</dbReference>
<dbReference type="SMR" id="B1JZ61"/>
<dbReference type="GeneID" id="93194057"/>
<dbReference type="KEGG" id="bcm:Bcenmc03_2868"/>
<dbReference type="HOGENOM" id="CLU_033323_1_1_4"/>
<dbReference type="UniPathway" id="UPA00109">
    <property type="reaction ID" value="UER00186"/>
</dbReference>
<dbReference type="Proteomes" id="UP000002169">
    <property type="component" value="Chromosome 1"/>
</dbReference>
<dbReference type="GO" id="GO:0004619">
    <property type="term" value="F:phosphoglycerate mutase activity"/>
    <property type="evidence" value="ECO:0007669"/>
    <property type="project" value="UniProtKB-EC"/>
</dbReference>
<dbReference type="GO" id="GO:0006094">
    <property type="term" value="P:gluconeogenesis"/>
    <property type="evidence" value="ECO:0007669"/>
    <property type="project" value="UniProtKB-UniRule"/>
</dbReference>
<dbReference type="GO" id="GO:0006096">
    <property type="term" value="P:glycolytic process"/>
    <property type="evidence" value="ECO:0007669"/>
    <property type="project" value="UniProtKB-UniRule"/>
</dbReference>
<dbReference type="CDD" id="cd07067">
    <property type="entry name" value="HP_PGM_like"/>
    <property type="match status" value="1"/>
</dbReference>
<dbReference type="FunFam" id="3.40.50.1240:FF:000003">
    <property type="entry name" value="2,3-bisphosphoglycerate-dependent phosphoglycerate mutase"/>
    <property type="match status" value="1"/>
</dbReference>
<dbReference type="Gene3D" id="3.40.50.1240">
    <property type="entry name" value="Phosphoglycerate mutase-like"/>
    <property type="match status" value="1"/>
</dbReference>
<dbReference type="HAMAP" id="MF_01039">
    <property type="entry name" value="PGAM_GpmA"/>
    <property type="match status" value="1"/>
</dbReference>
<dbReference type="InterPro" id="IPR013078">
    <property type="entry name" value="His_Pase_superF_clade-1"/>
</dbReference>
<dbReference type="InterPro" id="IPR029033">
    <property type="entry name" value="His_PPase_superfam"/>
</dbReference>
<dbReference type="InterPro" id="IPR001345">
    <property type="entry name" value="PG/BPGM_mutase_AS"/>
</dbReference>
<dbReference type="InterPro" id="IPR005952">
    <property type="entry name" value="Phosphogly_mut1"/>
</dbReference>
<dbReference type="NCBIfam" id="TIGR01258">
    <property type="entry name" value="pgm_1"/>
    <property type="match status" value="1"/>
</dbReference>
<dbReference type="NCBIfam" id="NF010713">
    <property type="entry name" value="PRK14115.1"/>
    <property type="match status" value="1"/>
</dbReference>
<dbReference type="PANTHER" id="PTHR11931">
    <property type="entry name" value="PHOSPHOGLYCERATE MUTASE"/>
    <property type="match status" value="1"/>
</dbReference>
<dbReference type="Pfam" id="PF00300">
    <property type="entry name" value="His_Phos_1"/>
    <property type="match status" value="1"/>
</dbReference>
<dbReference type="PIRSF" id="PIRSF000709">
    <property type="entry name" value="6PFK_2-Ptase"/>
    <property type="match status" value="1"/>
</dbReference>
<dbReference type="SMART" id="SM00855">
    <property type="entry name" value="PGAM"/>
    <property type="match status" value="1"/>
</dbReference>
<dbReference type="SUPFAM" id="SSF53254">
    <property type="entry name" value="Phosphoglycerate mutase-like"/>
    <property type="match status" value="1"/>
</dbReference>
<dbReference type="PROSITE" id="PS00175">
    <property type="entry name" value="PG_MUTASE"/>
    <property type="match status" value="1"/>
</dbReference>
<sequence length="248" mass="27925">MYKLVLIRHGESTWNKENRFTGWVDVDLTEQGRNEAYQAGELLKEAGYTFDIAYTSVLKRAIRTLWHVQDKMDLMYLPVVHSWRLNERHYGALSGLNKAETAAKFGDEQVLVWRRSYDTPPPALEPTDERAPFNDPRYAKVPREQLPLTECLKDTVARVLPLWNESIAPAVRAGKQVLIAAHGNSLRALIKYLDGISDSDIVGLNIPNGVPLVYELDENLKPIKHYYLGDQDAIAQAQAAVAKQGKAG</sequence>
<reference key="1">
    <citation type="submission" date="2008-02" db="EMBL/GenBank/DDBJ databases">
        <title>Complete sequence of chromosome 1 of Burkholderia cenocepacia MC0-3.</title>
        <authorList>
            <person name="Copeland A."/>
            <person name="Lucas S."/>
            <person name="Lapidus A."/>
            <person name="Barry K."/>
            <person name="Bruce D."/>
            <person name="Goodwin L."/>
            <person name="Glavina del Rio T."/>
            <person name="Dalin E."/>
            <person name="Tice H."/>
            <person name="Pitluck S."/>
            <person name="Chain P."/>
            <person name="Malfatti S."/>
            <person name="Shin M."/>
            <person name="Vergez L."/>
            <person name="Schmutz J."/>
            <person name="Larimer F."/>
            <person name="Land M."/>
            <person name="Hauser L."/>
            <person name="Kyrpides N."/>
            <person name="Mikhailova N."/>
            <person name="Tiedje J."/>
            <person name="Richardson P."/>
        </authorList>
    </citation>
    <scope>NUCLEOTIDE SEQUENCE [LARGE SCALE GENOMIC DNA]</scope>
    <source>
        <strain>MC0-3</strain>
    </source>
</reference>
<protein>
    <recommendedName>
        <fullName evidence="1">2,3-bisphosphoglycerate-dependent phosphoglycerate mutase</fullName>
        <shortName evidence="1">BPG-dependent PGAM</shortName>
        <shortName evidence="1">PGAM</shortName>
        <shortName evidence="1">Phosphoglyceromutase</shortName>
        <shortName evidence="1">dPGM</shortName>
        <ecNumber evidence="1">5.4.2.11</ecNumber>
    </recommendedName>
</protein>
<accession>B1JZ61</accession>
<evidence type="ECO:0000255" key="1">
    <source>
        <dbReference type="HAMAP-Rule" id="MF_01039"/>
    </source>
</evidence>
<organism>
    <name type="scientific">Burkholderia orbicola (strain MC0-3)</name>
    <dbReference type="NCBI Taxonomy" id="406425"/>
    <lineage>
        <taxon>Bacteria</taxon>
        <taxon>Pseudomonadati</taxon>
        <taxon>Pseudomonadota</taxon>
        <taxon>Betaproteobacteria</taxon>
        <taxon>Burkholderiales</taxon>
        <taxon>Burkholderiaceae</taxon>
        <taxon>Burkholderia</taxon>
        <taxon>Burkholderia cepacia complex</taxon>
        <taxon>Burkholderia orbicola</taxon>
    </lineage>
</organism>